<keyword id="KW-1003">Cell membrane</keyword>
<keyword id="KW-0285">Flavoprotein</keyword>
<keyword id="KW-0288">FMN</keyword>
<keyword id="KW-0472">Membrane</keyword>
<keyword id="KW-0560">Oxidoreductase</keyword>
<keyword id="KW-0665">Pyrimidine biosynthesis</keyword>
<gene>
    <name evidence="1" type="primary">pyrD</name>
    <name type="ordered locus">VV1654</name>
</gene>
<sequence>MLYRLARAGFFQLDAEKAHDLAIQNFKRFTGTPIDLFYRQQLPNRPVECMGLTFRNPVGLAAGLDKNGECIEAFDAMGFGFVEIGTVTPRAQSGNDKPRLFRLVGAEGIINRMGFNNLGVDNLIENVKKAKYSCVLGINIGKNKDTPIEKGAEDYLICMEKVYEYAGYIAVNISSPNTPGLRTLQYGEALDELLVELKRKQAELEEKHGKYVPLALKIAPDLTDDEISQICQSLINNKIDGVIATNTTLDRTMVEGMKYAQEAGGLSGRPLQSRSTEVVRLLRKELQGNIPIIGVGGVDSYVAAKEKMLAGADLVQVYSGFIYHGPGLVRDIVKNL</sequence>
<comment type="function">
    <text evidence="1">Catalyzes the conversion of dihydroorotate to orotate with quinone as electron acceptor.</text>
</comment>
<comment type="catalytic activity">
    <reaction evidence="1">
        <text>(S)-dihydroorotate + a quinone = orotate + a quinol</text>
        <dbReference type="Rhea" id="RHEA:30187"/>
        <dbReference type="ChEBI" id="CHEBI:24646"/>
        <dbReference type="ChEBI" id="CHEBI:30839"/>
        <dbReference type="ChEBI" id="CHEBI:30864"/>
        <dbReference type="ChEBI" id="CHEBI:132124"/>
        <dbReference type="EC" id="1.3.5.2"/>
    </reaction>
</comment>
<comment type="cofactor">
    <cofactor evidence="1">
        <name>FMN</name>
        <dbReference type="ChEBI" id="CHEBI:58210"/>
    </cofactor>
    <text evidence="1">Binds 1 FMN per subunit.</text>
</comment>
<comment type="pathway">
    <text evidence="1">Pyrimidine metabolism; UMP biosynthesis via de novo pathway; orotate from (S)-dihydroorotate (quinone route): step 1/1.</text>
</comment>
<comment type="subunit">
    <text evidence="1">Monomer.</text>
</comment>
<comment type="subcellular location">
    <subcellularLocation>
        <location evidence="1">Cell membrane</location>
        <topology evidence="1">Peripheral membrane protein</topology>
    </subcellularLocation>
</comment>
<comment type="similarity">
    <text evidence="1">Belongs to the dihydroorotate dehydrogenase family. Type 2 subfamily.</text>
</comment>
<organism>
    <name type="scientific">Vibrio vulnificus (strain YJ016)</name>
    <dbReference type="NCBI Taxonomy" id="196600"/>
    <lineage>
        <taxon>Bacteria</taxon>
        <taxon>Pseudomonadati</taxon>
        <taxon>Pseudomonadota</taxon>
        <taxon>Gammaproteobacteria</taxon>
        <taxon>Vibrionales</taxon>
        <taxon>Vibrionaceae</taxon>
        <taxon>Vibrio</taxon>
    </lineage>
</organism>
<dbReference type="EC" id="1.3.5.2" evidence="1"/>
<dbReference type="EMBL" id="BA000037">
    <property type="protein sequence ID" value="BAC94418.1"/>
    <property type="molecule type" value="Genomic_DNA"/>
</dbReference>
<dbReference type="RefSeq" id="WP_011150262.1">
    <property type="nucleotide sequence ID" value="NC_005139.1"/>
</dbReference>
<dbReference type="SMR" id="Q7MKX3"/>
<dbReference type="STRING" id="672.VV93_v1c15270"/>
<dbReference type="KEGG" id="vvy:VV1654"/>
<dbReference type="PATRIC" id="fig|196600.6.peg.1632"/>
<dbReference type="eggNOG" id="COG0167">
    <property type="taxonomic scope" value="Bacteria"/>
</dbReference>
<dbReference type="HOGENOM" id="CLU_013640_2_0_6"/>
<dbReference type="UniPathway" id="UPA00070">
    <property type="reaction ID" value="UER00946"/>
</dbReference>
<dbReference type="Proteomes" id="UP000002675">
    <property type="component" value="Chromosome I"/>
</dbReference>
<dbReference type="GO" id="GO:0005737">
    <property type="term" value="C:cytoplasm"/>
    <property type="evidence" value="ECO:0007669"/>
    <property type="project" value="InterPro"/>
</dbReference>
<dbReference type="GO" id="GO:0005886">
    <property type="term" value="C:plasma membrane"/>
    <property type="evidence" value="ECO:0007669"/>
    <property type="project" value="UniProtKB-SubCell"/>
</dbReference>
<dbReference type="GO" id="GO:0106430">
    <property type="term" value="F:dihydroorotate dehydrogenase (quinone) activity"/>
    <property type="evidence" value="ECO:0007669"/>
    <property type="project" value="UniProtKB-EC"/>
</dbReference>
<dbReference type="GO" id="GO:0006207">
    <property type="term" value="P:'de novo' pyrimidine nucleobase biosynthetic process"/>
    <property type="evidence" value="ECO:0007669"/>
    <property type="project" value="InterPro"/>
</dbReference>
<dbReference type="GO" id="GO:0044205">
    <property type="term" value="P:'de novo' UMP biosynthetic process"/>
    <property type="evidence" value="ECO:0007669"/>
    <property type="project" value="UniProtKB-UniRule"/>
</dbReference>
<dbReference type="CDD" id="cd04738">
    <property type="entry name" value="DHOD_2_like"/>
    <property type="match status" value="1"/>
</dbReference>
<dbReference type="FunFam" id="3.20.20.70:FF:000028">
    <property type="entry name" value="Dihydroorotate dehydrogenase (quinone)"/>
    <property type="match status" value="1"/>
</dbReference>
<dbReference type="Gene3D" id="3.20.20.70">
    <property type="entry name" value="Aldolase class I"/>
    <property type="match status" value="1"/>
</dbReference>
<dbReference type="HAMAP" id="MF_00225">
    <property type="entry name" value="DHO_dh_type2"/>
    <property type="match status" value="1"/>
</dbReference>
<dbReference type="InterPro" id="IPR013785">
    <property type="entry name" value="Aldolase_TIM"/>
</dbReference>
<dbReference type="InterPro" id="IPR050074">
    <property type="entry name" value="DHO_dehydrogenase"/>
</dbReference>
<dbReference type="InterPro" id="IPR012135">
    <property type="entry name" value="Dihydroorotate_DH_1_2"/>
</dbReference>
<dbReference type="InterPro" id="IPR005719">
    <property type="entry name" value="Dihydroorotate_DH_2"/>
</dbReference>
<dbReference type="InterPro" id="IPR005720">
    <property type="entry name" value="Dihydroorotate_DH_cat"/>
</dbReference>
<dbReference type="InterPro" id="IPR001295">
    <property type="entry name" value="Dihydroorotate_DH_CS"/>
</dbReference>
<dbReference type="NCBIfam" id="NF003644">
    <property type="entry name" value="PRK05286.1-1"/>
    <property type="match status" value="1"/>
</dbReference>
<dbReference type="NCBIfam" id="NF003645">
    <property type="entry name" value="PRK05286.1-2"/>
    <property type="match status" value="1"/>
</dbReference>
<dbReference type="NCBIfam" id="NF003646">
    <property type="entry name" value="PRK05286.1-4"/>
    <property type="match status" value="1"/>
</dbReference>
<dbReference type="NCBIfam" id="NF003652">
    <property type="entry name" value="PRK05286.2-5"/>
    <property type="match status" value="1"/>
</dbReference>
<dbReference type="NCBIfam" id="TIGR01036">
    <property type="entry name" value="pyrD_sub2"/>
    <property type="match status" value="1"/>
</dbReference>
<dbReference type="PANTHER" id="PTHR48109:SF4">
    <property type="entry name" value="DIHYDROOROTATE DEHYDROGENASE (QUINONE), MITOCHONDRIAL"/>
    <property type="match status" value="1"/>
</dbReference>
<dbReference type="PANTHER" id="PTHR48109">
    <property type="entry name" value="DIHYDROOROTATE DEHYDROGENASE (QUINONE), MITOCHONDRIAL-RELATED"/>
    <property type="match status" value="1"/>
</dbReference>
<dbReference type="Pfam" id="PF01180">
    <property type="entry name" value="DHO_dh"/>
    <property type="match status" value="1"/>
</dbReference>
<dbReference type="PIRSF" id="PIRSF000164">
    <property type="entry name" value="DHO_oxidase"/>
    <property type="match status" value="1"/>
</dbReference>
<dbReference type="SUPFAM" id="SSF51395">
    <property type="entry name" value="FMN-linked oxidoreductases"/>
    <property type="match status" value="1"/>
</dbReference>
<dbReference type="PROSITE" id="PS00911">
    <property type="entry name" value="DHODEHASE_1"/>
    <property type="match status" value="1"/>
</dbReference>
<dbReference type="PROSITE" id="PS00912">
    <property type="entry name" value="DHODEHASE_2"/>
    <property type="match status" value="1"/>
</dbReference>
<proteinExistence type="inferred from homology"/>
<reference key="1">
    <citation type="journal article" date="2003" name="Genome Res.">
        <title>Comparative genome analysis of Vibrio vulnificus, a marine pathogen.</title>
        <authorList>
            <person name="Chen C.-Y."/>
            <person name="Wu K.-M."/>
            <person name="Chang Y.-C."/>
            <person name="Chang C.-H."/>
            <person name="Tsai H.-C."/>
            <person name="Liao T.-L."/>
            <person name="Liu Y.-M."/>
            <person name="Chen H.-J."/>
            <person name="Shen A.B.-T."/>
            <person name="Li J.-C."/>
            <person name="Su T.-L."/>
            <person name="Shao C.-P."/>
            <person name="Lee C.-T."/>
            <person name="Hor L.-I."/>
            <person name="Tsai S.-F."/>
        </authorList>
    </citation>
    <scope>NUCLEOTIDE SEQUENCE [LARGE SCALE GENOMIC DNA]</scope>
    <source>
        <strain>YJ016</strain>
    </source>
</reference>
<name>PYRD_VIBVY</name>
<accession>Q7MKX3</accession>
<evidence type="ECO:0000255" key="1">
    <source>
        <dbReference type="HAMAP-Rule" id="MF_00225"/>
    </source>
</evidence>
<feature type="chain" id="PRO_0000148488" description="Dihydroorotate dehydrogenase (quinone)">
    <location>
        <begin position="1"/>
        <end position="336"/>
    </location>
</feature>
<feature type="active site" description="Nucleophile" evidence="1">
    <location>
        <position position="175"/>
    </location>
</feature>
<feature type="binding site" evidence="1">
    <location>
        <begin position="62"/>
        <end position="66"/>
    </location>
    <ligand>
        <name>FMN</name>
        <dbReference type="ChEBI" id="CHEBI:58210"/>
    </ligand>
</feature>
<feature type="binding site" evidence="1">
    <location>
        <position position="66"/>
    </location>
    <ligand>
        <name>substrate</name>
    </ligand>
</feature>
<feature type="binding site" evidence="1">
    <location>
        <position position="86"/>
    </location>
    <ligand>
        <name>FMN</name>
        <dbReference type="ChEBI" id="CHEBI:58210"/>
    </ligand>
</feature>
<feature type="binding site" evidence="1">
    <location>
        <begin position="111"/>
        <end position="115"/>
    </location>
    <ligand>
        <name>substrate</name>
    </ligand>
</feature>
<feature type="binding site" evidence="1">
    <location>
        <position position="139"/>
    </location>
    <ligand>
        <name>FMN</name>
        <dbReference type="ChEBI" id="CHEBI:58210"/>
    </ligand>
</feature>
<feature type="binding site" evidence="1">
    <location>
        <position position="172"/>
    </location>
    <ligand>
        <name>FMN</name>
        <dbReference type="ChEBI" id="CHEBI:58210"/>
    </ligand>
</feature>
<feature type="binding site" evidence="1">
    <location>
        <position position="172"/>
    </location>
    <ligand>
        <name>substrate</name>
    </ligand>
</feature>
<feature type="binding site" evidence="1">
    <location>
        <position position="177"/>
    </location>
    <ligand>
        <name>substrate</name>
    </ligand>
</feature>
<feature type="binding site" evidence="1">
    <location>
        <position position="217"/>
    </location>
    <ligand>
        <name>FMN</name>
        <dbReference type="ChEBI" id="CHEBI:58210"/>
    </ligand>
</feature>
<feature type="binding site" evidence="1">
    <location>
        <position position="245"/>
    </location>
    <ligand>
        <name>FMN</name>
        <dbReference type="ChEBI" id="CHEBI:58210"/>
    </ligand>
</feature>
<feature type="binding site" evidence="1">
    <location>
        <begin position="246"/>
        <end position="247"/>
    </location>
    <ligand>
        <name>substrate</name>
    </ligand>
</feature>
<feature type="binding site" evidence="1">
    <location>
        <position position="268"/>
    </location>
    <ligand>
        <name>FMN</name>
        <dbReference type="ChEBI" id="CHEBI:58210"/>
    </ligand>
</feature>
<feature type="binding site" evidence="1">
    <location>
        <position position="297"/>
    </location>
    <ligand>
        <name>FMN</name>
        <dbReference type="ChEBI" id="CHEBI:58210"/>
    </ligand>
</feature>
<feature type="binding site" evidence="1">
    <location>
        <begin position="318"/>
        <end position="319"/>
    </location>
    <ligand>
        <name>FMN</name>
        <dbReference type="ChEBI" id="CHEBI:58210"/>
    </ligand>
</feature>
<protein>
    <recommendedName>
        <fullName evidence="1">Dihydroorotate dehydrogenase (quinone)</fullName>
        <ecNumber evidence="1">1.3.5.2</ecNumber>
    </recommendedName>
    <alternativeName>
        <fullName evidence="1">DHOdehase</fullName>
        <shortName evidence="1">DHOD</shortName>
        <shortName evidence="1">DHODase</shortName>
    </alternativeName>
    <alternativeName>
        <fullName evidence="1">Dihydroorotate oxidase</fullName>
    </alternativeName>
</protein>